<dbReference type="EC" id="6.1.1.4" evidence="1"/>
<dbReference type="EMBL" id="CP000879">
    <property type="protein sequence ID" value="ABX31086.1"/>
    <property type="molecule type" value="Genomic_DNA"/>
</dbReference>
<dbReference type="RefSeq" id="WP_012208193.1">
    <property type="nucleotide sequence ID" value="NC_010003.1"/>
</dbReference>
<dbReference type="SMR" id="A9BF22"/>
<dbReference type="STRING" id="403833.Pmob_0344"/>
<dbReference type="KEGG" id="pmo:Pmob_0344"/>
<dbReference type="eggNOG" id="COG0495">
    <property type="taxonomic scope" value="Bacteria"/>
</dbReference>
<dbReference type="HOGENOM" id="CLU_004427_0_0_0"/>
<dbReference type="OrthoDB" id="9810365at2"/>
<dbReference type="Proteomes" id="UP000000789">
    <property type="component" value="Chromosome"/>
</dbReference>
<dbReference type="GO" id="GO:0005829">
    <property type="term" value="C:cytosol"/>
    <property type="evidence" value="ECO:0007669"/>
    <property type="project" value="TreeGrafter"/>
</dbReference>
<dbReference type="GO" id="GO:0002161">
    <property type="term" value="F:aminoacyl-tRNA deacylase activity"/>
    <property type="evidence" value="ECO:0007669"/>
    <property type="project" value="InterPro"/>
</dbReference>
<dbReference type="GO" id="GO:0005524">
    <property type="term" value="F:ATP binding"/>
    <property type="evidence" value="ECO:0007669"/>
    <property type="project" value="UniProtKB-UniRule"/>
</dbReference>
<dbReference type="GO" id="GO:0004823">
    <property type="term" value="F:leucine-tRNA ligase activity"/>
    <property type="evidence" value="ECO:0007669"/>
    <property type="project" value="UniProtKB-UniRule"/>
</dbReference>
<dbReference type="GO" id="GO:0006429">
    <property type="term" value="P:leucyl-tRNA aminoacylation"/>
    <property type="evidence" value="ECO:0007669"/>
    <property type="project" value="UniProtKB-UniRule"/>
</dbReference>
<dbReference type="CDD" id="cd07958">
    <property type="entry name" value="Anticodon_Ia_Leu_BEm"/>
    <property type="match status" value="1"/>
</dbReference>
<dbReference type="CDD" id="cd00812">
    <property type="entry name" value="LeuRS_core"/>
    <property type="match status" value="1"/>
</dbReference>
<dbReference type="FunFam" id="3.10.20.590:FF:000001">
    <property type="entry name" value="Leucine--tRNA ligase"/>
    <property type="match status" value="1"/>
</dbReference>
<dbReference type="FunFam" id="3.40.50.620:FF:000003">
    <property type="entry name" value="Leucine--tRNA ligase"/>
    <property type="match status" value="1"/>
</dbReference>
<dbReference type="FunFam" id="3.40.50.620:FF:000212">
    <property type="entry name" value="Leucine--tRNA ligase"/>
    <property type="match status" value="1"/>
</dbReference>
<dbReference type="FunFam" id="1.10.730.10:FF:000011">
    <property type="entry name" value="Leucine--tRNA ligase chloroplastic/mitochondrial"/>
    <property type="match status" value="1"/>
</dbReference>
<dbReference type="Gene3D" id="3.10.20.590">
    <property type="match status" value="1"/>
</dbReference>
<dbReference type="Gene3D" id="3.40.50.620">
    <property type="entry name" value="HUPs"/>
    <property type="match status" value="2"/>
</dbReference>
<dbReference type="Gene3D" id="1.10.730.10">
    <property type="entry name" value="Isoleucyl-tRNA Synthetase, Domain 1"/>
    <property type="match status" value="1"/>
</dbReference>
<dbReference type="HAMAP" id="MF_00049_B">
    <property type="entry name" value="Leu_tRNA_synth_B"/>
    <property type="match status" value="1"/>
</dbReference>
<dbReference type="InterPro" id="IPR001412">
    <property type="entry name" value="aa-tRNA-synth_I_CS"/>
</dbReference>
<dbReference type="InterPro" id="IPR002302">
    <property type="entry name" value="Leu-tRNA-ligase"/>
</dbReference>
<dbReference type="InterPro" id="IPR025709">
    <property type="entry name" value="Leu_tRNA-synth_edit"/>
</dbReference>
<dbReference type="InterPro" id="IPR013155">
    <property type="entry name" value="M/V/L/I-tRNA-synth_anticd-bd"/>
</dbReference>
<dbReference type="InterPro" id="IPR015413">
    <property type="entry name" value="Methionyl/Leucyl_tRNA_Synth"/>
</dbReference>
<dbReference type="InterPro" id="IPR014729">
    <property type="entry name" value="Rossmann-like_a/b/a_fold"/>
</dbReference>
<dbReference type="InterPro" id="IPR009080">
    <property type="entry name" value="tRNAsynth_Ia_anticodon-bd"/>
</dbReference>
<dbReference type="InterPro" id="IPR009008">
    <property type="entry name" value="Val/Leu/Ile-tRNA-synth_edit"/>
</dbReference>
<dbReference type="NCBIfam" id="TIGR00396">
    <property type="entry name" value="leuS_bact"/>
    <property type="match status" value="1"/>
</dbReference>
<dbReference type="PANTHER" id="PTHR43740:SF2">
    <property type="entry name" value="LEUCINE--TRNA LIGASE, MITOCHONDRIAL"/>
    <property type="match status" value="1"/>
</dbReference>
<dbReference type="PANTHER" id="PTHR43740">
    <property type="entry name" value="LEUCYL-TRNA SYNTHETASE"/>
    <property type="match status" value="1"/>
</dbReference>
<dbReference type="Pfam" id="PF08264">
    <property type="entry name" value="Anticodon_1"/>
    <property type="match status" value="1"/>
</dbReference>
<dbReference type="Pfam" id="PF13603">
    <property type="entry name" value="tRNA-synt_1_2"/>
    <property type="match status" value="1"/>
</dbReference>
<dbReference type="Pfam" id="PF09334">
    <property type="entry name" value="tRNA-synt_1g"/>
    <property type="match status" value="2"/>
</dbReference>
<dbReference type="PRINTS" id="PR00985">
    <property type="entry name" value="TRNASYNTHLEU"/>
</dbReference>
<dbReference type="SUPFAM" id="SSF47323">
    <property type="entry name" value="Anticodon-binding domain of a subclass of class I aminoacyl-tRNA synthetases"/>
    <property type="match status" value="1"/>
</dbReference>
<dbReference type="SUPFAM" id="SSF52374">
    <property type="entry name" value="Nucleotidylyl transferase"/>
    <property type="match status" value="1"/>
</dbReference>
<dbReference type="SUPFAM" id="SSF50677">
    <property type="entry name" value="ValRS/IleRS/LeuRS editing domain"/>
    <property type="match status" value="1"/>
</dbReference>
<dbReference type="PROSITE" id="PS00178">
    <property type="entry name" value="AA_TRNA_LIGASE_I"/>
    <property type="match status" value="1"/>
</dbReference>
<reference key="1">
    <citation type="submission" date="2007-11" db="EMBL/GenBank/DDBJ databases">
        <title>Complete sequence of Petroga mobilis SJ95.</title>
        <authorList>
            <consortium name="US DOE Joint Genome Institute"/>
            <person name="Copeland A."/>
            <person name="Lucas S."/>
            <person name="Lapidus A."/>
            <person name="Barry K."/>
            <person name="Glavina del Rio T."/>
            <person name="Dalin E."/>
            <person name="Tice H."/>
            <person name="Pitluck S."/>
            <person name="Meincke L."/>
            <person name="Brettin T."/>
            <person name="Bruce D."/>
            <person name="Detter J.C."/>
            <person name="Han C."/>
            <person name="Kuske C.R."/>
            <person name="Schmutz J."/>
            <person name="Larimer F."/>
            <person name="Land M."/>
            <person name="Hauser L."/>
            <person name="Kyrpides N."/>
            <person name="Mikhailova N."/>
            <person name="Noll K."/>
            <person name="Richardson P."/>
        </authorList>
    </citation>
    <scope>NUCLEOTIDE SEQUENCE [LARGE SCALE GENOMIC DNA]</scope>
    <source>
        <strain>DSM 10674 / SJ95</strain>
    </source>
</reference>
<keyword id="KW-0030">Aminoacyl-tRNA synthetase</keyword>
<keyword id="KW-0067">ATP-binding</keyword>
<keyword id="KW-0963">Cytoplasm</keyword>
<keyword id="KW-0436">Ligase</keyword>
<keyword id="KW-0547">Nucleotide-binding</keyword>
<keyword id="KW-0648">Protein biosynthesis</keyword>
<name>SYL_PETMO</name>
<organism>
    <name type="scientific">Petrotoga mobilis (strain DSM 10674 / SJ95)</name>
    <dbReference type="NCBI Taxonomy" id="403833"/>
    <lineage>
        <taxon>Bacteria</taxon>
        <taxon>Thermotogati</taxon>
        <taxon>Thermotogota</taxon>
        <taxon>Thermotogae</taxon>
        <taxon>Petrotogales</taxon>
        <taxon>Petrotogaceae</taxon>
        <taxon>Petrotoga</taxon>
    </lineage>
</organism>
<comment type="catalytic activity">
    <reaction evidence="1">
        <text>tRNA(Leu) + L-leucine + ATP = L-leucyl-tRNA(Leu) + AMP + diphosphate</text>
        <dbReference type="Rhea" id="RHEA:11688"/>
        <dbReference type="Rhea" id="RHEA-COMP:9613"/>
        <dbReference type="Rhea" id="RHEA-COMP:9622"/>
        <dbReference type="ChEBI" id="CHEBI:30616"/>
        <dbReference type="ChEBI" id="CHEBI:33019"/>
        <dbReference type="ChEBI" id="CHEBI:57427"/>
        <dbReference type="ChEBI" id="CHEBI:78442"/>
        <dbReference type="ChEBI" id="CHEBI:78494"/>
        <dbReference type="ChEBI" id="CHEBI:456215"/>
        <dbReference type="EC" id="6.1.1.4"/>
    </reaction>
</comment>
<comment type="subcellular location">
    <subcellularLocation>
        <location evidence="1">Cytoplasm</location>
    </subcellularLocation>
</comment>
<comment type="similarity">
    <text evidence="1">Belongs to the class-I aminoacyl-tRNA synthetase family.</text>
</comment>
<evidence type="ECO:0000255" key="1">
    <source>
        <dbReference type="HAMAP-Rule" id="MF_00049"/>
    </source>
</evidence>
<proteinExistence type="inferred from homology"/>
<accession>A9BF22</accession>
<protein>
    <recommendedName>
        <fullName evidence="1">Leucine--tRNA ligase</fullName>
        <ecNumber evidence="1">6.1.1.4</ecNumber>
    </recommendedName>
    <alternativeName>
        <fullName evidence="1">Leucyl-tRNA synthetase</fullName>
        <shortName evidence="1">LeuRS</shortName>
    </alternativeName>
</protein>
<sequence>MEKTYNPQEIERKWQRNWQEKDAFKVSNEEYHKKYYDLVMFPYPSGTLHVGHVKNYVIGDVIARYKRMRGYNVMHPFGFDAFGLPAENAAIEKGNIHPEDWTMQNINIIRNQIKKLGISYNWEREVITCKEDYYKWTQWIFLQLYKNGLAYKKKAPVNWCPNCKTVLANEQVVNGKCERCGTVVEIKQLEQWYFKITDYAEKLLYDLEKLSGWPENVKIMQKNWIGKSVGAEVEFNLDNGKGSLRVFTTRPDTLWGVTFMALAPESPLVEELTTPENSEKVNQFLQRVSLQDRFKRTAEGAEKEGVFTGSYAINPVNGEKIPIYVANYILYEYGTGAIMAVPAHDQRDFEFAKKYDLPIRIVIMPEGDELTEENLEKAYIGEGVLVNSGEFTGLDNQTAIREVSQWLEDKKIGKVVTQYKLRDWLISRQRYWGAPIPVVYCEKCGVVPVPEKDLPVKLPRDVAFEPTGKSPLIDHPDFKETTCPKCGGKAKREVDTMDTFVDSSWYYLRYVNPKLEDKPFNKEDVDNWLPVDQYIGGVEHAILHLLYSRFITKVLKDLGYVSFDEPFKNLFTQGMIYRNGAKMSKSKGNVVSPEEMIEKYGTDALRTYILFMAPPERDAEWNDSGIEGTYRFLNKVWNTYMKIQDKIIHLENKPNYPLKNKSEKDLRRKLHQTIEKITSDIEGNFQFNTAVSSLMELLNELNSYLNNTDDKDWNLNLLKEFSEDFVLMLSPIAPHISEELWKNFGKDEFIFKASWPEIDKNALKAEEITLAVQINGKLRAQITVDVSLNEDEVKSYALEDDKVQKYISGKKIQKIIYVPKKIINIVVK</sequence>
<feature type="chain" id="PRO_1000199217" description="Leucine--tRNA ligase">
    <location>
        <begin position="1"/>
        <end position="828"/>
    </location>
</feature>
<feature type="short sequence motif" description="'HIGH' region">
    <location>
        <begin position="42"/>
        <end position="52"/>
    </location>
</feature>
<feature type="short sequence motif" description="'KMSKS' region">
    <location>
        <begin position="582"/>
        <end position="586"/>
    </location>
</feature>
<feature type="binding site" evidence="1">
    <location>
        <position position="585"/>
    </location>
    <ligand>
        <name>ATP</name>
        <dbReference type="ChEBI" id="CHEBI:30616"/>
    </ligand>
</feature>
<gene>
    <name evidence="1" type="primary">leuS</name>
    <name type="ordered locus">Pmob_0344</name>
</gene>